<sequence length="228" mass="26339">MLHVEMLTLLFLVLWMCVFSQDPGSKVVADRYAVYWNSSNPRFQRGDYHIDVCINDYLDVFCPHYEDSVPEDKTERYVLYMVNFDGYSACDHTSKGFKRWECNRPHSPNGPLKFSEKFQLFTPFSLGFEFRPGREYFYISSAIPDNGRRSCLKLKVFVRPTNSCMKTIGVHDRVFDVNDKVENSLEPADDTVHESAEPSRGENAAQTPRIPSRLLAILLFLLAMLLTL</sequence>
<dbReference type="EMBL" id="U90664">
    <property type="protein sequence ID" value="AAB50239.1"/>
    <property type="molecule type" value="mRNA"/>
</dbReference>
<dbReference type="EMBL" id="U90665">
    <property type="protein sequence ID" value="AAB50240.1"/>
    <property type="molecule type" value="mRNA"/>
</dbReference>
<dbReference type="EMBL" id="BC040218">
    <property type="protein sequence ID" value="AAH40218.1"/>
    <property type="molecule type" value="mRNA"/>
</dbReference>
<dbReference type="CCDS" id="CCDS28934.1">
    <molecule id="O08543-2"/>
</dbReference>
<dbReference type="CCDS" id="CCDS28935.1">
    <molecule id="O08543-1"/>
</dbReference>
<dbReference type="RefSeq" id="NP_034239.1">
    <molecule id="O08543-2"/>
    <property type="nucleotide sequence ID" value="NM_010109.4"/>
</dbReference>
<dbReference type="RefSeq" id="NP_997537.1">
    <molecule id="O08543-1"/>
    <property type="nucleotide sequence ID" value="NM_207654.3"/>
</dbReference>
<dbReference type="PDB" id="1SHW">
    <property type="method" value="X-ray"/>
    <property type="resolution" value="2.20 A"/>
    <property type="chains" value="A=28-164"/>
</dbReference>
<dbReference type="PDB" id="1SHX">
    <property type="method" value="X-ray"/>
    <property type="resolution" value="2.10 A"/>
    <property type="chains" value="A/B=28-164"/>
</dbReference>
<dbReference type="PDBsum" id="1SHW"/>
<dbReference type="PDBsum" id="1SHX"/>
<dbReference type="SMR" id="O08543"/>
<dbReference type="BioGRID" id="199393">
    <property type="interactions" value="2"/>
</dbReference>
<dbReference type="FunCoup" id="O08543">
    <property type="interactions" value="784"/>
</dbReference>
<dbReference type="IntAct" id="O08543">
    <property type="interactions" value="2"/>
</dbReference>
<dbReference type="STRING" id="10090.ENSMUSP00000076115"/>
<dbReference type="GlyConnect" id="2293">
    <property type="glycosylation" value="1 N-Linked glycan (1 site)"/>
</dbReference>
<dbReference type="GlyCosmos" id="O08543">
    <property type="glycosylation" value="2 sites, 1 glycan"/>
</dbReference>
<dbReference type="GlyGen" id="O08543">
    <property type="glycosylation" value="2 sites, 1 N-linked glycan (1 site)"/>
</dbReference>
<dbReference type="iPTMnet" id="O08543"/>
<dbReference type="PhosphoSitePlus" id="O08543"/>
<dbReference type="PaxDb" id="10090-ENSMUSP00000076115"/>
<dbReference type="ProteomicsDB" id="277555">
    <molecule id="O08543-1"/>
</dbReference>
<dbReference type="ProteomicsDB" id="277556">
    <molecule id="O08543-2"/>
</dbReference>
<dbReference type="Pumba" id="O08543"/>
<dbReference type="Antibodypedia" id="25277">
    <property type="antibodies" value="269 antibodies from 34 providers"/>
</dbReference>
<dbReference type="DNASU" id="13640"/>
<dbReference type="Ensembl" id="ENSMUST00000076840.12">
    <molecule id="O08543-1"/>
    <property type="protein sequence ID" value="ENSMUSP00000076115.6"/>
    <property type="gene ID" value="ENSMUSG00000048915.13"/>
</dbReference>
<dbReference type="Ensembl" id="ENSMUST00000078839.5">
    <molecule id="O08543-2"/>
    <property type="protein sequence ID" value="ENSMUSP00000077883.5"/>
    <property type="gene ID" value="ENSMUSG00000048915.13"/>
</dbReference>
<dbReference type="GeneID" id="13640"/>
<dbReference type="KEGG" id="mmu:13640"/>
<dbReference type="UCSC" id="uc008dfg.2">
    <molecule id="O08543-1"/>
    <property type="organism name" value="mouse"/>
</dbReference>
<dbReference type="UCSC" id="uc008dfh.2">
    <molecule id="O08543-2"/>
    <property type="organism name" value="mouse"/>
</dbReference>
<dbReference type="AGR" id="MGI:107444"/>
<dbReference type="CTD" id="1946"/>
<dbReference type="MGI" id="MGI:107444">
    <property type="gene designation" value="Efna5"/>
</dbReference>
<dbReference type="VEuPathDB" id="HostDB:ENSMUSG00000048915"/>
<dbReference type="eggNOG" id="KOG3858">
    <property type="taxonomic scope" value="Eukaryota"/>
</dbReference>
<dbReference type="GeneTree" id="ENSGT00940000157299"/>
<dbReference type="HOGENOM" id="CLU_081598_0_0_1"/>
<dbReference type="InParanoid" id="O08543"/>
<dbReference type="OMA" id="NCVKTIG"/>
<dbReference type="OrthoDB" id="6250301at2759"/>
<dbReference type="PhylomeDB" id="O08543"/>
<dbReference type="Reactome" id="R-MMU-2682334">
    <property type="pathway name" value="EPH-Ephrin signaling"/>
</dbReference>
<dbReference type="Reactome" id="R-MMU-3928663">
    <property type="pathway name" value="EPHA-mediated growth cone collapse"/>
</dbReference>
<dbReference type="Reactome" id="R-MMU-3928665">
    <property type="pathway name" value="EPH-ephrin mediated repulsion of cells"/>
</dbReference>
<dbReference type="BioGRID-ORCS" id="13640">
    <property type="hits" value="0 hits in 78 CRISPR screens"/>
</dbReference>
<dbReference type="ChiTaRS" id="Efna5">
    <property type="organism name" value="mouse"/>
</dbReference>
<dbReference type="EvolutionaryTrace" id="O08543"/>
<dbReference type="PRO" id="PR:O08543"/>
<dbReference type="Proteomes" id="UP000000589">
    <property type="component" value="Chromosome 17"/>
</dbReference>
<dbReference type="RNAct" id="O08543">
    <property type="molecule type" value="protein"/>
</dbReference>
<dbReference type="Bgee" id="ENSMUSG00000048915">
    <property type="expression patterns" value="Expressed in superior cervical ganglion and 245 other cell types or tissues"/>
</dbReference>
<dbReference type="GO" id="GO:0005912">
    <property type="term" value="C:adherens junction"/>
    <property type="evidence" value="ECO:0000314"/>
    <property type="project" value="MGI"/>
</dbReference>
<dbReference type="GO" id="GO:0005604">
    <property type="term" value="C:basement membrane"/>
    <property type="evidence" value="ECO:0000314"/>
    <property type="project" value="MGI"/>
</dbReference>
<dbReference type="GO" id="GO:0005901">
    <property type="term" value="C:caveola"/>
    <property type="evidence" value="ECO:0007669"/>
    <property type="project" value="UniProtKB-SubCell"/>
</dbReference>
<dbReference type="GO" id="GO:0071944">
    <property type="term" value="C:cell periphery"/>
    <property type="evidence" value="ECO:0000314"/>
    <property type="project" value="MGI"/>
</dbReference>
<dbReference type="GO" id="GO:0009897">
    <property type="term" value="C:external side of plasma membrane"/>
    <property type="evidence" value="ECO:0000250"/>
    <property type="project" value="UniProtKB"/>
</dbReference>
<dbReference type="GO" id="GO:0098982">
    <property type="term" value="C:GABA-ergic synapse"/>
    <property type="evidence" value="ECO:0000314"/>
    <property type="project" value="SynGO"/>
</dbReference>
<dbReference type="GO" id="GO:0005886">
    <property type="term" value="C:plasma membrane"/>
    <property type="evidence" value="ECO:0000314"/>
    <property type="project" value="UniProtKB"/>
</dbReference>
<dbReference type="GO" id="GO:0045499">
    <property type="term" value="F:chemorepellent activity"/>
    <property type="evidence" value="ECO:0000314"/>
    <property type="project" value="MGI"/>
</dbReference>
<dbReference type="GO" id="GO:0046875">
    <property type="term" value="F:ephrin receptor binding"/>
    <property type="evidence" value="ECO:0000353"/>
    <property type="project" value="UniProtKB"/>
</dbReference>
<dbReference type="GO" id="GO:0005169">
    <property type="term" value="F:neurotrophin TRKB receptor binding"/>
    <property type="evidence" value="ECO:0000353"/>
    <property type="project" value="BHF-UCL"/>
</dbReference>
<dbReference type="GO" id="GO:0007411">
    <property type="term" value="P:axon guidance"/>
    <property type="evidence" value="ECO:0000314"/>
    <property type="project" value="MGI"/>
</dbReference>
<dbReference type="GO" id="GO:0071372">
    <property type="term" value="P:cellular response to follicle-stimulating hormone stimulus"/>
    <property type="evidence" value="ECO:0000314"/>
    <property type="project" value="MGI"/>
</dbReference>
<dbReference type="GO" id="GO:1904322">
    <property type="term" value="P:cellular response to forskolin"/>
    <property type="evidence" value="ECO:0000314"/>
    <property type="project" value="MGI"/>
</dbReference>
<dbReference type="GO" id="GO:0048668">
    <property type="term" value="P:collateral sprouting"/>
    <property type="evidence" value="ECO:0000314"/>
    <property type="project" value="BHF-UCL"/>
</dbReference>
<dbReference type="GO" id="GO:0048013">
    <property type="term" value="P:ephrin receptor signaling pathway"/>
    <property type="evidence" value="ECO:0000314"/>
    <property type="project" value="UniProtKB"/>
</dbReference>
<dbReference type="GO" id="GO:1900025">
    <property type="term" value="P:negative regulation of substrate adhesion-dependent cell spreading"/>
    <property type="evidence" value="ECO:0000266"/>
    <property type="project" value="MGI"/>
</dbReference>
<dbReference type="GO" id="GO:0048672">
    <property type="term" value="P:positive regulation of collateral sprouting"/>
    <property type="evidence" value="ECO:0000315"/>
    <property type="project" value="BHF-UCL"/>
</dbReference>
<dbReference type="GO" id="GO:0050731">
    <property type="term" value="P:positive regulation of peptidyl-tyrosine phosphorylation"/>
    <property type="evidence" value="ECO:0000314"/>
    <property type="project" value="UniProtKB"/>
</dbReference>
<dbReference type="GO" id="GO:0051965">
    <property type="term" value="P:positive regulation of synapse assembly"/>
    <property type="evidence" value="ECO:0000314"/>
    <property type="project" value="BHF-UCL"/>
</dbReference>
<dbReference type="GO" id="GO:0032956">
    <property type="term" value="P:regulation of actin cytoskeleton organization"/>
    <property type="evidence" value="ECO:0000314"/>
    <property type="project" value="UniProtKB"/>
</dbReference>
<dbReference type="GO" id="GO:0022604">
    <property type="term" value="P:regulation of cell morphogenesis"/>
    <property type="evidence" value="ECO:0000266"/>
    <property type="project" value="MGI"/>
</dbReference>
<dbReference type="GO" id="GO:0022407">
    <property type="term" value="P:regulation of cell-cell adhesion"/>
    <property type="evidence" value="ECO:0000314"/>
    <property type="project" value="UniProtKB"/>
</dbReference>
<dbReference type="GO" id="GO:0051893">
    <property type="term" value="P:regulation of focal adhesion assembly"/>
    <property type="evidence" value="ECO:0000250"/>
    <property type="project" value="UniProtKB"/>
</dbReference>
<dbReference type="GO" id="GO:0043087">
    <property type="term" value="P:regulation of GTPase activity"/>
    <property type="evidence" value="ECO:0000314"/>
    <property type="project" value="UniProtKB"/>
</dbReference>
<dbReference type="GO" id="GO:0061178">
    <property type="term" value="P:regulation of insulin secretion involved in cellular response to glucose stimulus"/>
    <property type="evidence" value="ECO:0000315"/>
    <property type="project" value="UniProtKB"/>
</dbReference>
<dbReference type="GO" id="GO:0070507">
    <property type="term" value="P:regulation of microtubule cytoskeleton organization"/>
    <property type="evidence" value="ECO:0000250"/>
    <property type="project" value="UniProtKB"/>
</dbReference>
<dbReference type="GO" id="GO:0031290">
    <property type="term" value="P:retinal ganglion cell axon guidance"/>
    <property type="evidence" value="ECO:0000314"/>
    <property type="project" value="MGI"/>
</dbReference>
<dbReference type="GO" id="GO:0099560">
    <property type="term" value="P:synaptic membrane adhesion"/>
    <property type="evidence" value="ECO:0000314"/>
    <property type="project" value="SynGO"/>
</dbReference>
<dbReference type="CDD" id="cd10425">
    <property type="entry name" value="Ephrin-A_Ectodomain"/>
    <property type="match status" value="1"/>
</dbReference>
<dbReference type="FunFam" id="2.60.40.420:FF:000005">
    <property type="entry name" value="Ephrin A5"/>
    <property type="match status" value="1"/>
</dbReference>
<dbReference type="Gene3D" id="2.60.40.420">
    <property type="entry name" value="Cupredoxins - blue copper proteins"/>
    <property type="match status" value="1"/>
</dbReference>
<dbReference type="InterPro" id="IPR008972">
    <property type="entry name" value="Cupredoxin"/>
</dbReference>
<dbReference type="InterPro" id="IPR031328">
    <property type="entry name" value="Ephrin"/>
</dbReference>
<dbReference type="InterPro" id="IPR034252">
    <property type="entry name" value="Ephrin-A_Ecto"/>
</dbReference>
<dbReference type="InterPro" id="IPR019765">
    <property type="entry name" value="Ephrin_CS"/>
</dbReference>
<dbReference type="InterPro" id="IPR001799">
    <property type="entry name" value="Ephrin_RBD"/>
</dbReference>
<dbReference type="PANTHER" id="PTHR11304">
    <property type="entry name" value="EPHRIN"/>
    <property type="match status" value="1"/>
</dbReference>
<dbReference type="PANTHER" id="PTHR11304:SF33">
    <property type="entry name" value="EPHRIN-A5"/>
    <property type="match status" value="1"/>
</dbReference>
<dbReference type="Pfam" id="PF00812">
    <property type="entry name" value="Ephrin"/>
    <property type="match status" value="1"/>
</dbReference>
<dbReference type="PRINTS" id="PR01347">
    <property type="entry name" value="EPHRIN"/>
</dbReference>
<dbReference type="SUPFAM" id="SSF49503">
    <property type="entry name" value="Cupredoxins"/>
    <property type="match status" value="1"/>
</dbReference>
<dbReference type="PROSITE" id="PS01299">
    <property type="entry name" value="EPHRIN_RBD_1"/>
    <property type="match status" value="1"/>
</dbReference>
<dbReference type="PROSITE" id="PS51551">
    <property type="entry name" value="EPHRIN_RBD_2"/>
    <property type="match status" value="1"/>
</dbReference>
<feature type="signal peptide" evidence="2">
    <location>
        <begin position="1"/>
        <end position="20"/>
    </location>
</feature>
<feature type="chain" id="PRO_0000008379" description="Ephrin-A5">
    <location>
        <begin position="21"/>
        <end position="203"/>
    </location>
</feature>
<feature type="propeptide" id="PRO_0000008380" description="Removed in mature form" evidence="2">
    <location>
        <begin position="204"/>
        <end position="228"/>
    </location>
</feature>
<feature type="domain" description="Ephrin RBD" evidence="3">
    <location>
        <begin position="29"/>
        <end position="162"/>
    </location>
</feature>
<feature type="region of interest" description="Disordered" evidence="4">
    <location>
        <begin position="186"/>
        <end position="205"/>
    </location>
</feature>
<feature type="compositionally biased region" description="Basic and acidic residues" evidence="4">
    <location>
        <begin position="190"/>
        <end position="200"/>
    </location>
</feature>
<feature type="lipid moiety-binding region" description="GPI-anchor amidated asparagine" evidence="2">
    <location>
        <position position="203"/>
    </location>
</feature>
<feature type="glycosylation site" description="N-linked (GlcNAc...) asparagine" evidence="6">
    <location>
        <position position="37"/>
    </location>
</feature>
<feature type="glycosylation site" description="N-linked (GlcNAc...) asparagine; atypical" evidence="9">
    <location>
        <position position="162"/>
    </location>
</feature>
<feature type="disulfide bond" evidence="3 6">
    <location>
        <begin position="62"/>
        <end position="102"/>
    </location>
</feature>
<feature type="disulfide bond" evidence="3 6">
    <location>
        <begin position="90"/>
        <end position="151"/>
    </location>
</feature>
<feature type="splice variant" id="VSP_001449" description="In isoform Short." evidence="12">
    <location>
        <begin position="163"/>
        <end position="189"/>
    </location>
</feature>
<feature type="strand" evidence="14">
    <location>
        <begin position="30"/>
        <end position="35"/>
    </location>
</feature>
<feature type="helix" evidence="14">
    <location>
        <begin position="41"/>
        <end position="44"/>
    </location>
</feature>
<feature type="strand" evidence="14">
    <location>
        <begin position="49"/>
        <end position="52"/>
    </location>
</feature>
<feature type="strand" evidence="14">
    <location>
        <begin position="57"/>
        <end position="61"/>
    </location>
</feature>
<feature type="strand" evidence="13">
    <location>
        <begin position="67"/>
        <end position="69"/>
    </location>
</feature>
<feature type="strand" evidence="13">
    <location>
        <begin position="71"/>
        <end position="73"/>
    </location>
</feature>
<feature type="strand" evidence="14">
    <location>
        <begin position="77"/>
        <end position="82"/>
    </location>
</feature>
<feature type="helix" evidence="14">
    <location>
        <begin position="84"/>
        <end position="88"/>
    </location>
</feature>
<feature type="strand" evidence="14">
    <location>
        <begin position="92"/>
        <end position="102"/>
    </location>
</feature>
<feature type="strand" evidence="13">
    <location>
        <begin position="108"/>
        <end position="111"/>
    </location>
</feature>
<feature type="strand" evidence="14">
    <location>
        <begin position="113"/>
        <end position="117"/>
    </location>
</feature>
<feature type="strand" evidence="14">
    <location>
        <begin position="134"/>
        <end position="144"/>
    </location>
</feature>
<feature type="strand" evidence="13">
    <location>
        <begin position="148"/>
        <end position="150"/>
    </location>
</feature>
<feature type="strand" evidence="14">
    <location>
        <begin position="153"/>
        <end position="158"/>
    </location>
</feature>
<feature type="turn" evidence="14">
    <location>
        <begin position="161"/>
        <end position="164"/>
    </location>
</feature>
<accession>O08543</accession>
<accession>O08544</accession>
<name>EFNA5_MOUSE</name>
<proteinExistence type="evidence at protein level"/>
<reference key="1">
    <citation type="journal article" date="1996" name="Dev. Biol.">
        <title>Distinct and overlapping expression patterns of ligands for Eph-related receptor tyrosine kinases during mouse embryogenesis.</title>
        <authorList>
            <person name="Flenniken A.M."/>
            <person name="Gale N.W."/>
            <person name="Yancopoulos G.D."/>
            <person name="Wilkinson D.G."/>
        </authorList>
    </citation>
    <scope>NUCLEOTIDE SEQUENCE [MRNA] (ISOFORMS LONG AND SHORT)</scope>
</reference>
<reference key="2">
    <citation type="journal article" date="2004" name="Genome Res.">
        <title>The status, quality, and expansion of the NIH full-length cDNA project: the Mammalian Gene Collection (MGC).</title>
        <authorList>
            <consortium name="The MGC Project Team"/>
        </authorList>
    </citation>
    <scope>NUCLEOTIDE SEQUENCE [LARGE SCALE MRNA] (ISOFORM LONG)</scope>
    <source>
        <strain>FVB/N</strain>
        <tissue>Mammary gland</tissue>
    </source>
</reference>
<reference key="3">
    <citation type="journal article" date="1997" name="Oncogene">
        <title>The Eek receptor, a member of the Eph family of tyrosine protein kinases, can be activated by three different Eph family ligands.</title>
        <authorList>
            <person name="Park S."/>
            <person name="Sanchez M.P."/>
        </authorList>
    </citation>
    <scope>FUNCTION IN EPHA8 ACTIVATION</scope>
    <scope>INTERACTION WITH EPHA8</scope>
</reference>
<reference key="4">
    <citation type="journal article" date="2000" name="Nature">
        <title>Regulation of repulsion versus adhesion by different splice forms of an Eph receptor.</title>
        <authorList>
            <person name="Holmberg J."/>
            <person name="Clarke D.L."/>
            <person name="Frisen J."/>
        </authorList>
    </citation>
    <scope>FUNCTION IN CELL ADHESION AND REPULSION</scope>
    <scope>EPHA7 RECEPTOR-BINDING</scope>
</reference>
<reference key="5">
    <citation type="journal article" date="2007" name="Cell">
        <title>EphA-Ephrin-A-mediated beta cell communication regulates insulin secretion from pancreatic islets.</title>
        <authorList>
            <person name="Konstantinova I."/>
            <person name="Nikolova G."/>
            <person name="Ohara-Imaizumi M."/>
            <person name="Meda P."/>
            <person name="Kucera T."/>
            <person name="Zarbalis K."/>
            <person name="Wurst W."/>
            <person name="Nagamatsu S."/>
            <person name="Lammert E."/>
        </authorList>
    </citation>
    <scope>FUNCTION IN INSULIN SECRETION</scope>
</reference>
<reference key="6">
    <citation type="journal article" date="2008" name="Proc. Natl. Acad. Sci. U.S.A.">
        <title>Loss of ephrin-A5 function disrupts lens fiber cell packing and leads to cataract.</title>
        <authorList>
            <person name="Cooper M.A."/>
            <person name="Son A.I."/>
            <person name="Komlos D."/>
            <person name="Sun Y."/>
            <person name="Kleiman N.J."/>
            <person name="Zhou R."/>
        </authorList>
    </citation>
    <scope>DISRUPTION PHENOTYPE</scope>
    <scope>FUNCTION IN LENS FIBER CELLS MORPHOGENESIS</scope>
</reference>
<reference key="7">
    <citation type="journal article" date="2009" name="Mol. Cell. Proteomics">
        <title>The mouse C2C12 myoblast cell surface N-linked glycoproteome: identification, glycosite occupancy, and membrane orientation.</title>
        <authorList>
            <person name="Gundry R.L."/>
            <person name="Raginski K."/>
            <person name="Tarasova Y."/>
            <person name="Tchernyshyov I."/>
            <person name="Bausch-Fluck D."/>
            <person name="Elliott S.T."/>
            <person name="Boheler K.R."/>
            <person name="Van Eyk J.E."/>
            <person name="Wollscheid B."/>
        </authorList>
    </citation>
    <scope>GLYCOSYLATION [LARGE SCALE ANALYSIS] AT ASN-162</scope>
    <source>
        <tissue>Myoblast</tissue>
    </source>
</reference>
<reference key="8">
    <citation type="journal article" date="2016" name="Front. Cell Dev. Biol.">
        <title>Gene expression profiling of muscle stem cells identifies novel regulators of postnatal myogenesis.</title>
        <authorList>
            <person name="Alonso-Martin S."/>
            <person name="Rochat A."/>
            <person name="Mademtzoglou D."/>
            <person name="Morais J."/>
            <person name="de Reynies A."/>
            <person name="Aurade F."/>
            <person name="Chang T.H."/>
            <person name="Zammit P.S."/>
            <person name="Relaix F."/>
        </authorList>
    </citation>
    <scope>DEVELOPMENTAL STAGE</scope>
    <scope>TISSUE SPECIFICITY</scope>
</reference>
<reference key="9">
    <citation type="journal article" date="2004" name="Nat. Neurosci.">
        <title>Repelling class discrimination: ephrin-A5 binds to and activates EphB2 receptor signaling.</title>
        <authorList>
            <person name="Himanen J.P."/>
            <person name="Chumley M.J."/>
            <person name="Lackmann M."/>
            <person name="Li C."/>
            <person name="Barton W.A."/>
            <person name="Jeffrey P.D."/>
            <person name="Vearing C."/>
            <person name="Geleick D."/>
            <person name="Feldheim D.A."/>
            <person name="Boyd A.W."/>
            <person name="Henkemeyer M."/>
            <person name="Nikolov D.B."/>
        </authorList>
    </citation>
    <scope>X-RAY CRYSTALLOGRAPHY (2.1 ANGSTROMS) OF 28-165 ALONE AND IN COMPLEX WITH EPHB2</scope>
    <scope>GLYCOSYLATION AT ASN-37</scope>
    <scope>DISULFIDE BONDS</scope>
</reference>
<evidence type="ECO:0000250" key="1"/>
<evidence type="ECO:0000255" key="2"/>
<evidence type="ECO:0000255" key="3">
    <source>
        <dbReference type="PROSITE-ProRule" id="PRU00884"/>
    </source>
</evidence>
<evidence type="ECO:0000256" key="4">
    <source>
        <dbReference type="SAM" id="MobiDB-lite"/>
    </source>
</evidence>
<evidence type="ECO:0000269" key="5">
    <source>
    </source>
</evidence>
<evidence type="ECO:0000269" key="6">
    <source>
    </source>
</evidence>
<evidence type="ECO:0000269" key="7">
    <source>
    </source>
</evidence>
<evidence type="ECO:0000269" key="8">
    <source>
    </source>
</evidence>
<evidence type="ECO:0000269" key="9">
    <source>
    </source>
</evidence>
<evidence type="ECO:0000269" key="10">
    <source>
    </source>
</evidence>
<evidence type="ECO:0000269" key="11">
    <source>
    </source>
</evidence>
<evidence type="ECO:0000303" key="12">
    <source>
    </source>
</evidence>
<evidence type="ECO:0007829" key="13">
    <source>
        <dbReference type="PDB" id="1SHW"/>
    </source>
</evidence>
<evidence type="ECO:0007829" key="14">
    <source>
        <dbReference type="PDB" id="1SHX"/>
    </source>
</evidence>
<protein>
    <recommendedName>
        <fullName>Ephrin-A5</fullName>
    </recommendedName>
    <alternativeName>
        <fullName>AL-1</fullName>
    </alternativeName>
    <alternativeName>
        <fullName>EPH-related receptor tyrosine kinase ligand 7</fullName>
        <shortName>LERK-7</shortName>
    </alternativeName>
</protein>
<comment type="function">
    <text evidence="5 7 8 11">Cell surface GPI-bound ligand for Eph receptors, a family of receptor tyrosine kinases which are crucial for migration, repulsion and adhesion during neuronal, vascular and epithelial development. Binds promiscuously Eph receptors residing on adjacent cells, leading to contact-dependent bidirectional signaling into neighboring cells. The signaling pathway downstream of the receptor is referred to as forward signaling while the signaling pathway downstream of the ephrin ligand is referred to as reverse signaling. Induces compartmentalized signaling within a caveolae-like membrane microdomain when bound to the extracellular domain of its cognate receptor. This signaling event requires the activity of the Fyn tyrosine kinase. Activates the EPHA3 receptor to regulate cell-cell adhesion and cytoskeletal organization. With the receptor EPHA2 may regulate lens fiber cells shape and interactions and be important for lens transparency maintenance. May function actively to stimulate axon fasciculation. The interaction of EFNA5 with EPHA5 also mediates communication between pancreatic islet cells to regulate glucose-stimulated insulin secretion. Cognate/functional ligand for EPHA7, their interaction regulates brain development modulating cell-cell adhesion and repulsion.</text>
</comment>
<comment type="subunit">
    <text evidence="1 6 11">Binds to the receptor tyrosine kinases EPHA2, EPHA3 and EPHB1. Forms a ternary EFNA5-EPHA3-ADAM10 complex mediating EFNA5 extracellular domain shedding by ADAM10 which regulates the EFNA5-EPHA3 complex internalization and function (By similarity). Binds to EPHB2. Interacts with EPHA8; activates EPHA8.</text>
</comment>
<comment type="subcellular location">
    <subcellularLocation>
        <location evidence="1">Cell membrane</location>
        <topology evidence="1">Lipid-anchor</topology>
        <topology evidence="1">GPI-anchor</topology>
    </subcellularLocation>
    <subcellularLocation>
        <location evidence="1">Membrane</location>
        <location evidence="1">Caveola</location>
        <topology evidence="1">Lipid-anchor</topology>
        <topology evidence="1">GPI-anchor</topology>
    </subcellularLocation>
    <text evidence="1">Compartmentalized in discrete caveolae-like membrane microdomains.</text>
</comment>
<comment type="alternative products">
    <event type="alternative splicing"/>
    <isoform>
        <id>O08543-1</id>
        <name>Long</name>
        <sequence type="displayed"/>
    </isoform>
    <isoform>
        <id>O08543-2</id>
        <name>Short</name>
        <sequence type="described" ref="VSP_001449"/>
    </isoform>
</comment>
<comment type="tissue specificity">
    <text evidence="10">Expressed in myogenic progenitor cells.</text>
</comment>
<comment type="developmental stage">
    <text evidence="10">In myogenic progenitor cells, highly expressed at 11.5 dpc and ceases its expression at the late fetal stage (17.5 dpc).</text>
</comment>
<comment type="disruption phenotype">
    <text evidence="8">Mice display cataract an opacification of the lens.</text>
</comment>
<comment type="similarity">
    <text evidence="3">Belongs to the ephrin family.</text>
</comment>
<gene>
    <name type="primary">Efna5</name>
    <name type="synonym">Epl7</name>
    <name type="synonym">Eplg7</name>
    <name type="synonym">Lerk7</name>
</gene>
<organism>
    <name type="scientific">Mus musculus</name>
    <name type="common">Mouse</name>
    <dbReference type="NCBI Taxonomy" id="10090"/>
    <lineage>
        <taxon>Eukaryota</taxon>
        <taxon>Metazoa</taxon>
        <taxon>Chordata</taxon>
        <taxon>Craniata</taxon>
        <taxon>Vertebrata</taxon>
        <taxon>Euteleostomi</taxon>
        <taxon>Mammalia</taxon>
        <taxon>Eutheria</taxon>
        <taxon>Euarchontoglires</taxon>
        <taxon>Glires</taxon>
        <taxon>Rodentia</taxon>
        <taxon>Myomorpha</taxon>
        <taxon>Muroidea</taxon>
        <taxon>Muridae</taxon>
        <taxon>Murinae</taxon>
        <taxon>Mus</taxon>
        <taxon>Mus</taxon>
    </lineage>
</organism>
<keyword id="KW-0002">3D-structure</keyword>
<keyword id="KW-0025">Alternative splicing</keyword>
<keyword id="KW-1003">Cell membrane</keyword>
<keyword id="KW-0217">Developmental protein</keyword>
<keyword id="KW-0221">Differentiation</keyword>
<keyword id="KW-1015">Disulfide bond</keyword>
<keyword id="KW-0325">Glycoprotein</keyword>
<keyword id="KW-0336">GPI-anchor</keyword>
<keyword id="KW-0449">Lipoprotein</keyword>
<keyword id="KW-0472">Membrane</keyword>
<keyword id="KW-0524">Neurogenesis</keyword>
<keyword id="KW-1185">Reference proteome</keyword>
<keyword id="KW-0732">Signal</keyword>